<sequence length="179" mass="20263">MSRLKEKFNTEVTENLMKEFNYSSVMEVPKIDKIVVNMGVGDAVQNSKVLDNAVEELELITGQKPLITKAKKSVATFRLREGMPIGAKVTLRGDRMYEFLDKLIAVSLPRVRDFHGVSKKAFDGRGNYTLGIKEQLIFPEIDYDKVSKVRGMDIVIVTTANTDEEGRELLKQFGMPFQK</sequence>
<dbReference type="EMBL" id="AM295250">
    <property type="protein sequence ID" value="CAL28629.1"/>
    <property type="molecule type" value="Genomic_DNA"/>
</dbReference>
<dbReference type="RefSeq" id="WP_015900967.1">
    <property type="nucleotide sequence ID" value="NC_012121.1"/>
</dbReference>
<dbReference type="SMR" id="B9DM35"/>
<dbReference type="GeneID" id="93794182"/>
<dbReference type="KEGG" id="sca:SCA_1723"/>
<dbReference type="eggNOG" id="COG0094">
    <property type="taxonomic scope" value="Bacteria"/>
</dbReference>
<dbReference type="HOGENOM" id="CLU_061015_2_1_9"/>
<dbReference type="OrthoDB" id="9806626at2"/>
<dbReference type="BioCyc" id="SCAR396513:SCA_RS08780-MONOMER"/>
<dbReference type="Proteomes" id="UP000000444">
    <property type="component" value="Chromosome"/>
</dbReference>
<dbReference type="GO" id="GO:1990904">
    <property type="term" value="C:ribonucleoprotein complex"/>
    <property type="evidence" value="ECO:0007669"/>
    <property type="project" value="UniProtKB-KW"/>
</dbReference>
<dbReference type="GO" id="GO:0005840">
    <property type="term" value="C:ribosome"/>
    <property type="evidence" value="ECO:0007669"/>
    <property type="project" value="UniProtKB-KW"/>
</dbReference>
<dbReference type="GO" id="GO:0019843">
    <property type="term" value="F:rRNA binding"/>
    <property type="evidence" value="ECO:0007669"/>
    <property type="project" value="UniProtKB-UniRule"/>
</dbReference>
<dbReference type="GO" id="GO:0003735">
    <property type="term" value="F:structural constituent of ribosome"/>
    <property type="evidence" value="ECO:0007669"/>
    <property type="project" value="InterPro"/>
</dbReference>
<dbReference type="GO" id="GO:0000049">
    <property type="term" value="F:tRNA binding"/>
    <property type="evidence" value="ECO:0007669"/>
    <property type="project" value="UniProtKB-UniRule"/>
</dbReference>
<dbReference type="GO" id="GO:0006412">
    <property type="term" value="P:translation"/>
    <property type="evidence" value="ECO:0007669"/>
    <property type="project" value="UniProtKB-UniRule"/>
</dbReference>
<dbReference type="FunFam" id="3.30.1440.10:FF:000001">
    <property type="entry name" value="50S ribosomal protein L5"/>
    <property type="match status" value="1"/>
</dbReference>
<dbReference type="Gene3D" id="3.30.1440.10">
    <property type="match status" value="1"/>
</dbReference>
<dbReference type="HAMAP" id="MF_01333_B">
    <property type="entry name" value="Ribosomal_uL5_B"/>
    <property type="match status" value="1"/>
</dbReference>
<dbReference type="InterPro" id="IPR002132">
    <property type="entry name" value="Ribosomal_uL5"/>
</dbReference>
<dbReference type="InterPro" id="IPR020930">
    <property type="entry name" value="Ribosomal_uL5_bac-type"/>
</dbReference>
<dbReference type="InterPro" id="IPR031309">
    <property type="entry name" value="Ribosomal_uL5_C"/>
</dbReference>
<dbReference type="InterPro" id="IPR020929">
    <property type="entry name" value="Ribosomal_uL5_CS"/>
</dbReference>
<dbReference type="InterPro" id="IPR022803">
    <property type="entry name" value="Ribosomal_uL5_dom_sf"/>
</dbReference>
<dbReference type="InterPro" id="IPR031310">
    <property type="entry name" value="Ribosomal_uL5_N"/>
</dbReference>
<dbReference type="NCBIfam" id="NF000585">
    <property type="entry name" value="PRK00010.1"/>
    <property type="match status" value="1"/>
</dbReference>
<dbReference type="PANTHER" id="PTHR11994">
    <property type="entry name" value="60S RIBOSOMAL PROTEIN L11-RELATED"/>
    <property type="match status" value="1"/>
</dbReference>
<dbReference type="Pfam" id="PF00281">
    <property type="entry name" value="Ribosomal_L5"/>
    <property type="match status" value="1"/>
</dbReference>
<dbReference type="Pfam" id="PF00673">
    <property type="entry name" value="Ribosomal_L5_C"/>
    <property type="match status" value="1"/>
</dbReference>
<dbReference type="PIRSF" id="PIRSF002161">
    <property type="entry name" value="Ribosomal_L5"/>
    <property type="match status" value="1"/>
</dbReference>
<dbReference type="SUPFAM" id="SSF55282">
    <property type="entry name" value="RL5-like"/>
    <property type="match status" value="1"/>
</dbReference>
<dbReference type="PROSITE" id="PS00358">
    <property type="entry name" value="RIBOSOMAL_L5"/>
    <property type="match status" value="1"/>
</dbReference>
<accession>B9DM35</accession>
<proteinExistence type="inferred from homology"/>
<feature type="chain" id="PRO_1000166148" description="Large ribosomal subunit protein uL5">
    <location>
        <begin position="1"/>
        <end position="179"/>
    </location>
</feature>
<protein>
    <recommendedName>
        <fullName evidence="1">Large ribosomal subunit protein uL5</fullName>
    </recommendedName>
    <alternativeName>
        <fullName evidence="2">50S ribosomal protein L5</fullName>
    </alternativeName>
</protein>
<comment type="function">
    <text evidence="1">This is one of the proteins that bind and probably mediate the attachment of the 5S RNA into the large ribosomal subunit, where it forms part of the central protuberance. In the 70S ribosome it contacts protein S13 of the 30S subunit (bridge B1b), connecting the 2 subunits; this bridge is implicated in subunit movement. Contacts the P site tRNA; the 5S rRNA and some of its associated proteins might help stabilize positioning of ribosome-bound tRNAs.</text>
</comment>
<comment type="subunit">
    <text evidence="1">Part of the 50S ribosomal subunit; part of the 5S rRNA/L5/L18/L25 subcomplex. Contacts the 5S rRNA and the P site tRNA. Forms a bridge to the 30S subunit in the 70S ribosome.</text>
</comment>
<comment type="similarity">
    <text evidence="1">Belongs to the universal ribosomal protein uL5 family.</text>
</comment>
<gene>
    <name evidence="1" type="primary">rplE</name>
    <name type="ordered locus">Sca_1723</name>
</gene>
<name>RL5_STACT</name>
<organism>
    <name type="scientific">Staphylococcus carnosus (strain TM300)</name>
    <dbReference type="NCBI Taxonomy" id="396513"/>
    <lineage>
        <taxon>Bacteria</taxon>
        <taxon>Bacillati</taxon>
        <taxon>Bacillota</taxon>
        <taxon>Bacilli</taxon>
        <taxon>Bacillales</taxon>
        <taxon>Staphylococcaceae</taxon>
        <taxon>Staphylococcus</taxon>
    </lineage>
</organism>
<reference key="1">
    <citation type="journal article" date="2009" name="Appl. Environ. Microbiol.">
        <title>Genome analysis of the meat starter culture bacterium Staphylococcus carnosus TM300.</title>
        <authorList>
            <person name="Rosenstein R."/>
            <person name="Nerz C."/>
            <person name="Biswas L."/>
            <person name="Resch A."/>
            <person name="Raddatz G."/>
            <person name="Schuster S.C."/>
            <person name="Goetz F."/>
        </authorList>
    </citation>
    <scope>NUCLEOTIDE SEQUENCE [LARGE SCALE GENOMIC DNA]</scope>
    <source>
        <strain>TM300</strain>
    </source>
</reference>
<keyword id="KW-1185">Reference proteome</keyword>
<keyword id="KW-0687">Ribonucleoprotein</keyword>
<keyword id="KW-0689">Ribosomal protein</keyword>
<keyword id="KW-0694">RNA-binding</keyword>
<keyword id="KW-0699">rRNA-binding</keyword>
<keyword id="KW-0820">tRNA-binding</keyword>
<evidence type="ECO:0000255" key="1">
    <source>
        <dbReference type="HAMAP-Rule" id="MF_01333"/>
    </source>
</evidence>
<evidence type="ECO:0000305" key="2"/>